<name>DAS1_HUMAN</name>
<evidence type="ECO:0000256" key="1">
    <source>
        <dbReference type="SAM" id="MobiDB-lite"/>
    </source>
</evidence>
<keyword id="KW-1185">Reference proteome</keyword>
<sequence length="148" mass="15587">MPGGDTTPEEAAAPSCAGYNPGLLLFRAQKAQGACVTSTEGAWPRRASALYGGRKMRCGESGAGPDPRSNSAEVSSSQPALASKSQSKWGPTSNNPRGALTTTEFEMAGNRSQNIKHKQTALIAIPMSSQTPRMLGRPRNQGQLYPQP</sequence>
<feature type="chain" id="PRO_0000324592" description="Putative uncharacterized protein DNAJC9-AS1">
    <location>
        <begin position="1"/>
        <end position="148"/>
    </location>
</feature>
<feature type="region of interest" description="Disordered" evidence="1">
    <location>
        <begin position="55"/>
        <end position="148"/>
    </location>
</feature>
<feature type="compositionally biased region" description="Polar residues" evidence="1">
    <location>
        <begin position="68"/>
        <end position="104"/>
    </location>
</feature>
<protein>
    <recommendedName>
        <fullName>Putative uncharacterized protein DNAJC9-AS1</fullName>
    </recommendedName>
    <alternativeName>
        <fullName>DNAJC9 antisense RNA 1</fullName>
    </alternativeName>
    <alternativeName>
        <fullName>DNAJC9 antisense gene protein 1</fullName>
    </alternativeName>
</protein>
<organism>
    <name type="scientific">Homo sapiens</name>
    <name type="common">Human</name>
    <dbReference type="NCBI Taxonomy" id="9606"/>
    <lineage>
        <taxon>Eukaryota</taxon>
        <taxon>Metazoa</taxon>
        <taxon>Chordata</taxon>
        <taxon>Craniata</taxon>
        <taxon>Vertebrata</taxon>
        <taxon>Euteleostomi</taxon>
        <taxon>Mammalia</taxon>
        <taxon>Eutheria</taxon>
        <taxon>Euarchontoglires</taxon>
        <taxon>Primates</taxon>
        <taxon>Haplorrhini</taxon>
        <taxon>Catarrhini</taxon>
        <taxon>Hominidae</taxon>
        <taxon>Homo</taxon>
    </lineage>
</organism>
<dbReference type="EMBL" id="AC016394">
    <property type="status" value="NOT_ANNOTATED_CDS"/>
    <property type="molecule type" value="Genomic_DNA"/>
</dbReference>
<dbReference type="EMBL" id="BC043233">
    <property type="status" value="NOT_ANNOTATED_CDS"/>
    <property type="molecule type" value="mRNA"/>
</dbReference>
<dbReference type="BioMuta" id="HGNC:31432"/>
<dbReference type="AGR" id="HGNC:31432"/>
<dbReference type="GeneCards" id="DNAJC9-AS1"/>
<dbReference type="HGNC" id="HGNC:31432">
    <property type="gene designation" value="DNAJC9-AS1"/>
</dbReference>
<dbReference type="neXtProt" id="NX_A6NH13"/>
<dbReference type="InParanoid" id="A6NH13"/>
<dbReference type="PAN-GO" id="A6NH13">
    <property type="GO annotations" value="0 GO annotations based on evolutionary models"/>
</dbReference>
<dbReference type="PhylomeDB" id="A6NH13"/>
<dbReference type="TreeFam" id="TF353740"/>
<dbReference type="ChiTaRS" id="DNAJC9-AS1">
    <property type="organism name" value="human"/>
</dbReference>
<dbReference type="Pharos" id="A6NH13">
    <property type="development level" value="Tdark"/>
</dbReference>
<dbReference type="PRO" id="PR:A6NH13"/>
<dbReference type="Proteomes" id="UP000005640">
    <property type="component" value="Unplaced"/>
</dbReference>
<dbReference type="RNAct" id="A6NH13">
    <property type="molecule type" value="protein"/>
</dbReference>
<proteinExistence type="evidence at transcript level"/>
<reference key="1">
    <citation type="journal article" date="2004" name="Nature">
        <title>The DNA sequence and comparative analysis of human chromosome 10.</title>
        <authorList>
            <person name="Deloukas P."/>
            <person name="Earthrowl M.E."/>
            <person name="Grafham D.V."/>
            <person name="Rubenfield M."/>
            <person name="French L."/>
            <person name="Steward C.A."/>
            <person name="Sims S.K."/>
            <person name="Jones M.C."/>
            <person name="Searle S."/>
            <person name="Scott C."/>
            <person name="Howe K."/>
            <person name="Hunt S.E."/>
            <person name="Andrews T.D."/>
            <person name="Gilbert J.G.R."/>
            <person name="Swarbreck D."/>
            <person name="Ashurst J.L."/>
            <person name="Taylor A."/>
            <person name="Battles J."/>
            <person name="Bird C.P."/>
            <person name="Ainscough R."/>
            <person name="Almeida J.P."/>
            <person name="Ashwell R.I.S."/>
            <person name="Ambrose K.D."/>
            <person name="Babbage A.K."/>
            <person name="Bagguley C.L."/>
            <person name="Bailey J."/>
            <person name="Banerjee R."/>
            <person name="Bates K."/>
            <person name="Beasley H."/>
            <person name="Bray-Allen S."/>
            <person name="Brown A.J."/>
            <person name="Brown J.Y."/>
            <person name="Burford D.C."/>
            <person name="Burrill W."/>
            <person name="Burton J."/>
            <person name="Cahill P."/>
            <person name="Camire D."/>
            <person name="Carter N.P."/>
            <person name="Chapman J.C."/>
            <person name="Clark S.Y."/>
            <person name="Clarke G."/>
            <person name="Clee C.M."/>
            <person name="Clegg S."/>
            <person name="Corby N."/>
            <person name="Coulson A."/>
            <person name="Dhami P."/>
            <person name="Dutta I."/>
            <person name="Dunn M."/>
            <person name="Faulkner L."/>
            <person name="Frankish A."/>
            <person name="Frankland J.A."/>
            <person name="Garner P."/>
            <person name="Garnett J."/>
            <person name="Gribble S."/>
            <person name="Griffiths C."/>
            <person name="Grocock R."/>
            <person name="Gustafson E."/>
            <person name="Hammond S."/>
            <person name="Harley J.L."/>
            <person name="Hart E."/>
            <person name="Heath P.D."/>
            <person name="Ho T.P."/>
            <person name="Hopkins B."/>
            <person name="Horne J."/>
            <person name="Howden P.J."/>
            <person name="Huckle E."/>
            <person name="Hynds C."/>
            <person name="Johnson C."/>
            <person name="Johnson D."/>
            <person name="Kana A."/>
            <person name="Kay M."/>
            <person name="Kimberley A.M."/>
            <person name="Kershaw J.K."/>
            <person name="Kokkinaki M."/>
            <person name="Laird G.K."/>
            <person name="Lawlor S."/>
            <person name="Lee H.M."/>
            <person name="Leongamornlert D.A."/>
            <person name="Laird G."/>
            <person name="Lloyd C."/>
            <person name="Lloyd D.M."/>
            <person name="Loveland J."/>
            <person name="Lovell J."/>
            <person name="McLaren S."/>
            <person name="McLay K.E."/>
            <person name="McMurray A."/>
            <person name="Mashreghi-Mohammadi M."/>
            <person name="Matthews L."/>
            <person name="Milne S."/>
            <person name="Nickerson T."/>
            <person name="Nguyen M."/>
            <person name="Overton-Larty E."/>
            <person name="Palmer S.A."/>
            <person name="Pearce A.V."/>
            <person name="Peck A.I."/>
            <person name="Pelan S."/>
            <person name="Phillimore B."/>
            <person name="Porter K."/>
            <person name="Rice C.M."/>
            <person name="Rogosin A."/>
            <person name="Ross M.T."/>
            <person name="Sarafidou T."/>
            <person name="Sehra H.K."/>
            <person name="Shownkeen R."/>
            <person name="Skuce C.D."/>
            <person name="Smith M."/>
            <person name="Standring L."/>
            <person name="Sycamore N."/>
            <person name="Tester J."/>
            <person name="Thorpe A."/>
            <person name="Torcasso W."/>
            <person name="Tracey A."/>
            <person name="Tromans A."/>
            <person name="Tsolas J."/>
            <person name="Wall M."/>
            <person name="Walsh J."/>
            <person name="Wang H."/>
            <person name="Weinstock K."/>
            <person name="West A.P."/>
            <person name="Willey D.L."/>
            <person name="Whitehead S.L."/>
            <person name="Wilming L."/>
            <person name="Wray P.W."/>
            <person name="Young L."/>
            <person name="Chen Y."/>
            <person name="Lovering R.C."/>
            <person name="Moschonas N.K."/>
            <person name="Siebert R."/>
            <person name="Fechtel K."/>
            <person name="Bentley D."/>
            <person name="Durbin R.M."/>
            <person name="Hubbard T."/>
            <person name="Doucette-Stamm L."/>
            <person name="Beck S."/>
            <person name="Smith D.R."/>
            <person name="Rogers J."/>
        </authorList>
    </citation>
    <scope>NUCLEOTIDE SEQUENCE [LARGE SCALE GENOMIC DNA]</scope>
</reference>
<reference key="2">
    <citation type="journal article" date="2004" name="Genome Res.">
        <title>The status, quality, and expansion of the NIH full-length cDNA project: the Mammalian Gene Collection (MGC).</title>
        <authorList>
            <consortium name="The MGC Project Team"/>
        </authorList>
    </citation>
    <scope>NUCLEOTIDE SEQUENCE [LARGE SCALE MRNA] OF 61-148</scope>
    <source>
        <tissue>Testis</tissue>
    </source>
</reference>
<accession>A6NH13</accession>
<gene>
    <name type="primary">DNAJC9-AS1</name>
    <name type="synonym">C10orf103</name>
</gene>